<comment type="subcellular location">
    <subcellularLocation>
        <location evidence="4">Cell membrane</location>
        <topology evidence="4">Single-pass type I membrane protein</topology>
    </subcellularLocation>
</comment>
<comment type="alternative products">
    <event type="alternative splicing"/>
    <isoform>
        <id>Q9S9U3-1</id>
        <name>1</name>
        <sequence type="displayed"/>
    </isoform>
    <isoform>
        <id>Q9S9U3-2</id>
        <name>2</name>
        <sequence type="described" ref="VSP_059574"/>
    </isoform>
</comment>
<comment type="similarity">
    <text evidence="4">Belongs to the RLP family.</text>
</comment>
<organism>
    <name type="scientific">Arabidopsis thaliana</name>
    <name type="common">Mouse-ear cress</name>
    <dbReference type="NCBI Taxonomy" id="3702"/>
    <lineage>
        <taxon>Eukaryota</taxon>
        <taxon>Viridiplantae</taxon>
        <taxon>Streptophyta</taxon>
        <taxon>Embryophyta</taxon>
        <taxon>Tracheophyta</taxon>
        <taxon>Spermatophyta</taxon>
        <taxon>Magnoliopsida</taxon>
        <taxon>eudicotyledons</taxon>
        <taxon>Gunneridae</taxon>
        <taxon>Pentapetalae</taxon>
        <taxon>rosids</taxon>
        <taxon>malvids</taxon>
        <taxon>Brassicales</taxon>
        <taxon>Brassicaceae</taxon>
        <taxon>Camelineae</taxon>
        <taxon>Arabidopsis</taxon>
    </lineage>
</organism>
<sequence length="957" mass="106675">MEGFWNSKSIIRITLSFIFLFICHFLDVLAAPTRNLCRPEQRDALLAFKNEFEIGKPSPDHCKIYGIESPRKTDSWGNNSDCCNWEGVTCNAKSGEVIELDLSCSSLHGRFHSNSSIRNLHFLTTLDLSFNDFKGQITSSIENLSHLTYLDLSSNHFSGQILNSIGNLSRLTYLNLFDNQFSGQAPSSICNLSHLTFLDLSYNRFFGQFPSSIGGLSHLTTLSLFSNKFSGQIPSSIGNLSNLTTLDLSNNNFSGQIPSFIGNLSQLTFLGLFSNNFVGEIPSSFGNLNQLTRLYVDDNKLSGNFPNVLLNLTGLSLLSLSNNKFTGTLPPNITSLSNLMDFDASDNAFTGTFPSFLFTIPSLTYIRLNGNQLKGTLEFGNISSPSNLYELDIGNNNFIGPIPSSISKLVKLFRLDISHLNTQGPVDFSIFSHLKSLLDLNISHLNTTTRIDLNYFLSYFKRLLLLDLSGNHVSATNKSSVSDPPSQLIQSLYLSGCGITEFPEFVRTQHELGFLDISNNKIKGQVPDWLWRLPILYYVNLSNNTLIGFQRPSKPEPSLLYLLGSNNNFIGKIPSFICGLRSLNTLDLSDNNFNGSIPRCMGHLKSTLSVLNLRQNHLSGGLPKQIFEILRSLDVGHNQLVGKLPRSLSFFSTLEVLNVESNRINDTFPFWLSSLPKLQVLVLRSNAFHGPIHEATFPELRIIDISHNRFNGTLPTEYFVKWSAMSSLGKNEDQSNEKYMGSGLYYQDSMVLMNKGVAMELVRILTIYTAVDFSGNRFEGEIPKSIGLLKELLVLSLSNNAFSGHMPSSMGNLTALESLDVSKNKLTGEIPQELGDLSFLAYMNFSHNQLAGLVPGGQQFLTQNCSAFEDNLGLFGSSLEEVCRDIHTPASHQQFETPETEEEDEDLISWIAAAIGFGPGIAFGLMFGYILVSYKPEWFMNPFDRNNRRQKRHKTTH</sequence>
<name>RLP53_ARATH</name>
<proteinExistence type="inferred from homology"/>
<feature type="signal peptide" evidence="1">
    <location>
        <begin position="1"/>
        <end position="30"/>
    </location>
</feature>
<feature type="chain" id="PRO_5014108341" description="Receptor-like protein 53">
    <location>
        <begin position="31"/>
        <end position="957"/>
    </location>
</feature>
<feature type="topological domain" description="Extracellular" evidence="1">
    <location>
        <begin position="31"/>
        <end position="910"/>
    </location>
</feature>
<feature type="transmembrane region" description="Helical" evidence="1">
    <location>
        <begin position="911"/>
        <end position="931"/>
    </location>
</feature>
<feature type="topological domain" description="Cytoplasmic" evidence="1">
    <location>
        <begin position="932"/>
        <end position="957"/>
    </location>
</feature>
<feature type="repeat" description="LRR 1" evidence="1">
    <location>
        <begin position="120"/>
        <end position="143"/>
    </location>
</feature>
<feature type="repeat" description="LRR 2" evidence="1">
    <location>
        <begin position="144"/>
        <end position="170"/>
    </location>
</feature>
<feature type="repeat" description="LRR 3" evidence="1">
    <location>
        <begin position="172"/>
        <end position="192"/>
    </location>
</feature>
<feature type="repeat" description="LRR 4" evidence="1">
    <location>
        <begin position="193"/>
        <end position="216"/>
    </location>
</feature>
<feature type="repeat" description="LRR 5" evidence="1">
    <location>
        <begin position="217"/>
        <end position="240"/>
    </location>
</feature>
<feature type="repeat" description="LRR 6" evidence="1">
    <location>
        <begin position="241"/>
        <end position="266"/>
    </location>
</feature>
<feature type="repeat" description="LRR 7" evidence="1">
    <location>
        <begin position="268"/>
        <end position="287"/>
    </location>
</feature>
<feature type="repeat" description="LRR 8" evidence="1">
    <location>
        <begin position="288"/>
        <end position="312"/>
    </location>
</feature>
<feature type="repeat" description="LRR 9" evidence="1">
    <location>
        <begin position="313"/>
        <end position="336"/>
    </location>
</feature>
<feature type="repeat" description="LRR 10" evidence="1">
    <location>
        <begin position="338"/>
        <end position="360"/>
    </location>
</feature>
<feature type="repeat" description="LRR 11" evidence="1">
    <location>
        <begin position="361"/>
        <end position="384"/>
    </location>
</feature>
<feature type="repeat" description="LRR 12" evidence="1">
    <location>
        <begin position="386"/>
        <end position="409"/>
    </location>
</feature>
<feature type="repeat" description="LRR 13; degenerate" evidence="4">
    <location>
        <begin position="412"/>
        <end position="433"/>
    </location>
</feature>
<feature type="repeat" description="LRR 14" evidence="1">
    <location>
        <begin position="434"/>
        <end position="458"/>
    </location>
</feature>
<feature type="repeat" description="LRR 15" evidence="1">
    <location>
        <begin position="460"/>
        <end position="483"/>
    </location>
</feature>
<feature type="repeat" description="LRR 16" evidence="1">
    <location>
        <begin position="486"/>
        <end position="509"/>
    </location>
</feature>
<feature type="repeat" description="LRR 17" evidence="1">
    <location>
        <begin position="510"/>
        <end position="533"/>
    </location>
</feature>
<feature type="repeat" description="LRR 18" evidence="1">
    <location>
        <begin position="535"/>
        <end position="556"/>
    </location>
</feature>
<feature type="repeat" description="LRR 19" evidence="1">
    <location>
        <begin position="558"/>
        <end position="580"/>
    </location>
</feature>
<feature type="repeat" description="LRR 20" evidence="1">
    <location>
        <begin position="581"/>
        <end position="604"/>
    </location>
</feature>
<feature type="repeat" description="LRR 21" evidence="1">
    <location>
        <begin position="605"/>
        <end position="629"/>
    </location>
</feature>
<feature type="repeat" description="LRR 22" evidence="1">
    <location>
        <begin position="631"/>
        <end position="651"/>
    </location>
</feature>
<feature type="repeat" description="LRR 23" evidence="1">
    <location>
        <begin position="652"/>
        <end position="674"/>
    </location>
</feature>
<feature type="repeat" description="LRR 24" evidence="1">
    <location>
        <begin position="675"/>
        <end position="697"/>
    </location>
</feature>
<feature type="repeat" description="LRR 25" evidence="1">
    <location>
        <begin position="698"/>
        <end position="721"/>
    </location>
</feature>
<feature type="repeat" description="LRR 26" evidence="1">
    <location>
        <begin position="765"/>
        <end position="789"/>
    </location>
</feature>
<feature type="repeat" description="LRR 27" evidence="1">
    <location>
        <begin position="790"/>
        <end position="813"/>
    </location>
</feature>
<feature type="repeat" description="LRR 28" evidence="1">
    <location>
        <begin position="814"/>
        <end position="837"/>
    </location>
</feature>
<feature type="repeat" description="LRR 29" evidence="1">
    <location>
        <begin position="839"/>
        <end position="862"/>
    </location>
</feature>
<feature type="glycosylation site" description="N-linked (GlcNAc...) asparagine" evidence="2">
    <location>
        <position position="78"/>
    </location>
</feature>
<feature type="glycosylation site" description="N-linked (GlcNAc...) asparagine" evidence="2">
    <location>
        <position position="114"/>
    </location>
</feature>
<feature type="glycosylation site" description="N-linked (GlcNAc...) asparagine" evidence="2">
    <location>
        <position position="143"/>
    </location>
</feature>
<feature type="glycosylation site" description="N-linked (GlcNAc...) asparagine" evidence="2">
    <location>
        <position position="167"/>
    </location>
</feature>
<feature type="glycosylation site" description="N-linked (GlcNAc...) asparagine" evidence="2">
    <location>
        <position position="191"/>
    </location>
</feature>
<feature type="glycosylation site" description="N-linked (GlcNAc...) asparagine" evidence="2">
    <location>
        <position position="239"/>
    </location>
</feature>
<feature type="glycosylation site" description="N-linked (GlcNAc...) asparagine" evidence="2">
    <location>
        <position position="242"/>
    </location>
</feature>
<feature type="glycosylation site" description="N-linked (GlcNAc...) asparagine" evidence="2">
    <location>
        <position position="252"/>
    </location>
</feature>
<feature type="glycosylation site" description="N-linked (GlcNAc...) asparagine" evidence="2">
    <location>
        <position position="263"/>
    </location>
</feature>
<feature type="glycosylation site" description="N-linked (GlcNAc...) asparagine" evidence="2">
    <location>
        <position position="311"/>
    </location>
</feature>
<feature type="glycosylation site" description="N-linked (GlcNAc...) asparagine" evidence="2">
    <location>
        <position position="332"/>
    </location>
</feature>
<feature type="glycosylation site" description="N-linked (GlcNAc...) asparagine" evidence="2">
    <location>
        <position position="381"/>
    </location>
</feature>
<feature type="glycosylation site" description="N-linked (GlcNAc...) asparagine" evidence="2">
    <location>
        <position position="441"/>
    </location>
</feature>
<feature type="glycosylation site" description="N-linked (GlcNAc...) asparagine" evidence="2">
    <location>
        <position position="446"/>
    </location>
</feature>
<feature type="glycosylation site" description="N-linked (GlcNAc...) asparagine" evidence="2">
    <location>
        <position position="477"/>
    </location>
</feature>
<feature type="glycosylation site" description="N-linked (GlcNAc...) asparagine" evidence="2">
    <location>
        <position position="540"/>
    </location>
</feature>
<feature type="glycosylation site" description="N-linked (GlcNAc...) asparagine" evidence="2">
    <location>
        <position position="543"/>
    </location>
</feature>
<feature type="glycosylation site" description="N-linked (GlcNAc...) asparagine" evidence="2">
    <location>
        <position position="594"/>
    </location>
</feature>
<feature type="glycosylation site" description="N-linked (GlcNAc...) asparagine" evidence="2">
    <location>
        <position position="665"/>
    </location>
</feature>
<feature type="glycosylation site" description="N-linked (GlcNAc...) asparagine" evidence="2">
    <location>
        <position position="711"/>
    </location>
</feature>
<feature type="glycosylation site" description="N-linked (GlcNAc...) asparagine" evidence="2">
    <location>
        <position position="812"/>
    </location>
</feature>
<feature type="glycosylation site" description="N-linked (GlcNAc...) asparagine" evidence="2">
    <location>
        <position position="844"/>
    </location>
</feature>
<feature type="glycosylation site" description="N-linked (GlcNAc...) asparagine" evidence="2">
    <location>
        <position position="864"/>
    </location>
</feature>
<feature type="splice variant" id="VSP_059574" description="In isoform 2.">
    <original>M</original>
    <variation>MM</variation>
    <location>
        <position position="1"/>
    </location>
</feature>
<accession>Q9S9U3</accession>
<accession>A0A1R7T3K3</accession>
<protein>
    <recommendedName>
        <fullName evidence="3">Receptor-like protein 53</fullName>
        <shortName evidence="3">AtRLP53</shortName>
    </recommendedName>
</protein>
<evidence type="ECO:0000255" key="1"/>
<evidence type="ECO:0000255" key="2">
    <source>
        <dbReference type="PROSITE-ProRule" id="PRU00498"/>
    </source>
</evidence>
<evidence type="ECO:0000303" key="3">
    <source>
    </source>
</evidence>
<evidence type="ECO:0000305" key="4"/>
<evidence type="ECO:0000312" key="5">
    <source>
        <dbReference type="Araport" id="AT5G27060"/>
    </source>
</evidence>
<evidence type="ECO:0000312" key="6">
    <source>
        <dbReference type="EMBL" id="AAD48937.1"/>
    </source>
</evidence>
<gene>
    <name evidence="3" type="primary">RLP53</name>
    <name evidence="5" type="ordered locus">At5g27060</name>
    <name evidence="6" type="ORF">F15P11.4</name>
</gene>
<reference key="1">
    <citation type="journal article" date="2000" name="Nature">
        <title>Sequence and analysis of chromosome 5 of the plant Arabidopsis thaliana.</title>
        <authorList>
            <person name="Tabata S."/>
            <person name="Kaneko T."/>
            <person name="Nakamura Y."/>
            <person name="Kotani H."/>
            <person name="Kato T."/>
            <person name="Asamizu E."/>
            <person name="Miyajima N."/>
            <person name="Sasamoto S."/>
            <person name="Kimura T."/>
            <person name="Hosouchi T."/>
            <person name="Kawashima K."/>
            <person name="Kohara M."/>
            <person name="Matsumoto M."/>
            <person name="Matsuno A."/>
            <person name="Muraki A."/>
            <person name="Nakayama S."/>
            <person name="Nakazaki N."/>
            <person name="Naruo K."/>
            <person name="Okumura S."/>
            <person name="Shinpo S."/>
            <person name="Takeuchi C."/>
            <person name="Wada T."/>
            <person name="Watanabe A."/>
            <person name="Yamada M."/>
            <person name="Yasuda M."/>
            <person name="Sato S."/>
            <person name="de la Bastide M."/>
            <person name="Huang E."/>
            <person name="Spiegel L."/>
            <person name="Gnoj L."/>
            <person name="O'Shaughnessy A."/>
            <person name="Preston R."/>
            <person name="Habermann K."/>
            <person name="Murray J."/>
            <person name="Johnson D."/>
            <person name="Rohlfing T."/>
            <person name="Nelson J."/>
            <person name="Stoneking T."/>
            <person name="Pepin K."/>
            <person name="Spieth J."/>
            <person name="Sekhon M."/>
            <person name="Armstrong J."/>
            <person name="Becker M."/>
            <person name="Belter E."/>
            <person name="Cordum H."/>
            <person name="Cordes M."/>
            <person name="Courtney L."/>
            <person name="Courtney W."/>
            <person name="Dante M."/>
            <person name="Du H."/>
            <person name="Edwards J."/>
            <person name="Fryman J."/>
            <person name="Haakensen B."/>
            <person name="Lamar E."/>
            <person name="Latreille P."/>
            <person name="Leonard S."/>
            <person name="Meyer R."/>
            <person name="Mulvaney E."/>
            <person name="Ozersky P."/>
            <person name="Riley A."/>
            <person name="Strowmatt C."/>
            <person name="Wagner-McPherson C."/>
            <person name="Wollam A."/>
            <person name="Yoakum M."/>
            <person name="Bell M."/>
            <person name="Dedhia N."/>
            <person name="Parnell L."/>
            <person name="Shah R."/>
            <person name="Rodriguez M."/>
            <person name="Hoon See L."/>
            <person name="Vil D."/>
            <person name="Baker J."/>
            <person name="Kirchoff K."/>
            <person name="Toth K."/>
            <person name="King L."/>
            <person name="Bahret A."/>
            <person name="Miller B."/>
            <person name="Marra M.A."/>
            <person name="Martienssen R."/>
            <person name="McCombie W.R."/>
            <person name="Wilson R.K."/>
            <person name="Murphy G."/>
            <person name="Bancroft I."/>
            <person name="Volckaert G."/>
            <person name="Wambutt R."/>
            <person name="Duesterhoeft A."/>
            <person name="Stiekema W."/>
            <person name="Pohl T."/>
            <person name="Entian K.-D."/>
            <person name="Terryn N."/>
            <person name="Hartley N."/>
            <person name="Bent E."/>
            <person name="Johnson S."/>
            <person name="Langham S.-A."/>
            <person name="McCullagh B."/>
            <person name="Robben J."/>
            <person name="Grymonprez B."/>
            <person name="Zimmermann W."/>
            <person name="Ramsperger U."/>
            <person name="Wedler H."/>
            <person name="Balke K."/>
            <person name="Wedler E."/>
            <person name="Peters S."/>
            <person name="van Staveren M."/>
            <person name="Dirkse W."/>
            <person name="Mooijman P."/>
            <person name="Klein Lankhorst R."/>
            <person name="Weitzenegger T."/>
            <person name="Bothe G."/>
            <person name="Rose M."/>
            <person name="Hauf J."/>
            <person name="Berneiser S."/>
            <person name="Hempel S."/>
            <person name="Feldpausch M."/>
            <person name="Lamberth S."/>
            <person name="Villarroel R."/>
            <person name="Gielen J."/>
            <person name="Ardiles W."/>
            <person name="Bents O."/>
            <person name="Lemcke K."/>
            <person name="Kolesov G."/>
            <person name="Mayer K.F.X."/>
            <person name="Rudd S."/>
            <person name="Schoof H."/>
            <person name="Schueller C."/>
            <person name="Zaccaria P."/>
            <person name="Mewes H.-W."/>
            <person name="Bevan M."/>
            <person name="Fransz P.F."/>
        </authorList>
    </citation>
    <scope>NUCLEOTIDE SEQUENCE [LARGE SCALE GENOMIC DNA]</scope>
    <source>
        <strain>cv. Columbia</strain>
    </source>
</reference>
<reference key="2">
    <citation type="journal article" date="2017" name="Plant J.">
        <title>Araport11: a complete reannotation of the Arabidopsis thaliana reference genome.</title>
        <authorList>
            <person name="Cheng C.Y."/>
            <person name="Krishnakumar V."/>
            <person name="Chan A.P."/>
            <person name="Thibaud-Nissen F."/>
            <person name="Schobel S."/>
            <person name="Town C.D."/>
        </authorList>
    </citation>
    <scope>GENOME REANNOTATION</scope>
    <source>
        <strain>cv. Columbia</strain>
    </source>
</reference>
<reference key="3">
    <citation type="journal article" date="2005" name="Plant Physiol.">
        <title>Phylogenomic analysis of the receptor-like proteins of rice and Arabidopsis.</title>
        <authorList>
            <person name="Fritz-Laylin L.K."/>
            <person name="Krishnamurthy N."/>
            <person name="Toer M."/>
            <person name="Sjoelander K.V."/>
            <person name="Jones J.D."/>
        </authorList>
    </citation>
    <scope>GENE FAMILY</scope>
</reference>
<reference key="4">
    <citation type="journal article" date="2008" name="Plant Physiol.">
        <title>A genome-wide functional investigation into the roles of receptor-like proteins in Arabidopsis.</title>
        <authorList>
            <person name="Wang G."/>
            <person name="Ellendorff U."/>
            <person name="Kemp B."/>
            <person name="Mansfield J.W."/>
            <person name="Forsyth A."/>
            <person name="Mitchell K."/>
            <person name="Bastas K."/>
            <person name="Liu C.-M."/>
            <person name="Woods-Toer A."/>
            <person name="Zipfel C."/>
            <person name="de Wit P.J.G.M."/>
            <person name="Jones J.D.G."/>
            <person name="Toer M."/>
            <person name="Thomma B.P.H.J."/>
        </authorList>
    </citation>
    <scope>GENE FAMILY</scope>
    <scope>NOMENCLATURE</scope>
    <source>
        <strain>cv. Columbia</strain>
    </source>
</reference>
<keyword id="KW-0025">Alternative splicing</keyword>
<keyword id="KW-1003">Cell membrane</keyword>
<keyword id="KW-0325">Glycoprotein</keyword>
<keyword id="KW-0433">Leucine-rich repeat</keyword>
<keyword id="KW-0472">Membrane</keyword>
<keyword id="KW-0675">Receptor</keyword>
<keyword id="KW-1185">Reference proteome</keyword>
<keyword id="KW-0677">Repeat</keyword>
<keyword id="KW-0732">Signal</keyword>
<keyword id="KW-0812">Transmembrane</keyword>
<keyword id="KW-1133">Transmembrane helix</keyword>
<dbReference type="EMBL" id="AF160760">
    <property type="protein sequence ID" value="AAD48937.1"/>
    <property type="molecule type" value="Genomic_DNA"/>
</dbReference>
<dbReference type="EMBL" id="CP002688">
    <property type="protein sequence ID" value="AED93645.1"/>
    <property type="molecule type" value="Genomic_DNA"/>
</dbReference>
<dbReference type="EMBL" id="CP002688">
    <property type="protein sequence ID" value="ANM71208.1"/>
    <property type="molecule type" value="Genomic_DNA"/>
</dbReference>
<dbReference type="EMBL" id="CP002688">
    <property type="protein sequence ID" value="ANM71209.1"/>
    <property type="molecule type" value="Genomic_DNA"/>
</dbReference>
<dbReference type="RefSeq" id="NP_001318660.1">
    <molecule id="Q9S9U3-1"/>
    <property type="nucleotide sequence ID" value="NM_001343990.1"/>
</dbReference>
<dbReference type="RefSeq" id="NP_001332753.1">
    <molecule id="Q9S9U3-2"/>
    <property type="nucleotide sequence ID" value="NM_001343991.1"/>
</dbReference>
<dbReference type="RefSeq" id="NP_198058.1">
    <molecule id="Q9S9U3-1"/>
    <property type="nucleotide sequence ID" value="NM_122588.1"/>
</dbReference>
<dbReference type="SMR" id="Q9S9U3"/>
<dbReference type="FunCoup" id="Q9S9U3">
    <property type="interactions" value="19"/>
</dbReference>
<dbReference type="IntAct" id="Q9S9U3">
    <property type="interactions" value="5"/>
</dbReference>
<dbReference type="STRING" id="3702.Q9S9U3"/>
<dbReference type="GlyCosmos" id="Q9S9U3">
    <property type="glycosylation" value="23 sites, No reported glycans"/>
</dbReference>
<dbReference type="GlyGen" id="Q9S9U3">
    <property type="glycosylation" value="23 sites"/>
</dbReference>
<dbReference type="PaxDb" id="3702-AT5G27060.1"/>
<dbReference type="EnsemblPlants" id="AT5G27060.1">
    <molecule id="Q9S9U3-1"/>
    <property type="protein sequence ID" value="AT5G27060.1"/>
    <property type="gene ID" value="AT5G27060"/>
</dbReference>
<dbReference type="EnsemblPlants" id="AT5G27060.2">
    <molecule id="Q9S9U3-2"/>
    <property type="protein sequence ID" value="AT5G27060.2"/>
    <property type="gene ID" value="AT5G27060"/>
</dbReference>
<dbReference type="EnsemblPlants" id="AT5G27060.3">
    <molecule id="Q9S9U3-1"/>
    <property type="protein sequence ID" value="AT5G27060.3"/>
    <property type="gene ID" value="AT5G27060"/>
</dbReference>
<dbReference type="GeneID" id="832764"/>
<dbReference type="Gramene" id="AT5G27060.1">
    <molecule id="Q9S9U3-1"/>
    <property type="protein sequence ID" value="AT5G27060.1"/>
    <property type="gene ID" value="AT5G27060"/>
</dbReference>
<dbReference type="Gramene" id="AT5G27060.2">
    <molecule id="Q9S9U3-2"/>
    <property type="protein sequence ID" value="AT5G27060.2"/>
    <property type="gene ID" value="AT5G27060"/>
</dbReference>
<dbReference type="Gramene" id="AT5G27060.3">
    <molecule id="Q9S9U3-1"/>
    <property type="protein sequence ID" value="AT5G27060.3"/>
    <property type="gene ID" value="AT5G27060"/>
</dbReference>
<dbReference type="KEGG" id="ath:AT5G27060"/>
<dbReference type="Araport" id="AT5G27060"/>
<dbReference type="TAIR" id="AT5G27060">
    <property type="gene designation" value="RLP53"/>
</dbReference>
<dbReference type="eggNOG" id="KOG0619">
    <property type="taxonomic scope" value="Eukaryota"/>
</dbReference>
<dbReference type="HOGENOM" id="CLU_000288_18_3_1"/>
<dbReference type="InParanoid" id="Q9S9U3"/>
<dbReference type="OMA" id="TLDNCCV"/>
<dbReference type="PhylomeDB" id="Q9S9U3"/>
<dbReference type="PRO" id="PR:Q9S9U3"/>
<dbReference type="Proteomes" id="UP000006548">
    <property type="component" value="Chromosome 5"/>
</dbReference>
<dbReference type="ExpressionAtlas" id="Q9S9U3">
    <property type="expression patterns" value="baseline and differential"/>
</dbReference>
<dbReference type="GO" id="GO:0005886">
    <property type="term" value="C:plasma membrane"/>
    <property type="evidence" value="ECO:0007669"/>
    <property type="project" value="UniProtKB-SubCell"/>
</dbReference>
<dbReference type="FunFam" id="3.80.10.10:FF:000041">
    <property type="entry name" value="LRR receptor-like serine/threonine-protein kinase ERECTA"/>
    <property type="match status" value="1"/>
</dbReference>
<dbReference type="FunFam" id="3.80.10.10:FF:000111">
    <property type="entry name" value="LRR receptor-like serine/threonine-protein kinase ERECTA"/>
    <property type="match status" value="1"/>
</dbReference>
<dbReference type="FunFam" id="3.80.10.10:FF:000095">
    <property type="entry name" value="LRR receptor-like serine/threonine-protein kinase GSO1"/>
    <property type="match status" value="2"/>
</dbReference>
<dbReference type="Gene3D" id="3.80.10.10">
    <property type="entry name" value="Ribonuclease Inhibitor"/>
    <property type="match status" value="3"/>
</dbReference>
<dbReference type="InterPro" id="IPR001611">
    <property type="entry name" value="Leu-rich_rpt"/>
</dbReference>
<dbReference type="InterPro" id="IPR003591">
    <property type="entry name" value="Leu-rich_rpt_typical-subtyp"/>
</dbReference>
<dbReference type="InterPro" id="IPR032675">
    <property type="entry name" value="LRR_dom_sf"/>
</dbReference>
<dbReference type="InterPro" id="IPR013210">
    <property type="entry name" value="LRR_N_plant-typ"/>
</dbReference>
<dbReference type="InterPro" id="IPR055414">
    <property type="entry name" value="LRR_R13L4/SHOC2-like"/>
</dbReference>
<dbReference type="PANTHER" id="PTHR48052:SF85">
    <property type="entry name" value="LEUCINE-RICH REPEAT-CONTAINING N-TERMINAL PLANT-TYPE DOMAIN-CONTAINING PROTEIN"/>
    <property type="match status" value="1"/>
</dbReference>
<dbReference type="PANTHER" id="PTHR48052">
    <property type="entry name" value="UNNAMED PRODUCT"/>
    <property type="match status" value="1"/>
</dbReference>
<dbReference type="Pfam" id="PF00560">
    <property type="entry name" value="LRR_1"/>
    <property type="match status" value="5"/>
</dbReference>
<dbReference type="Pfam" id="PF23598">
    <property type="entry name" value="LRR_14"/>
    <property type="match status" value="1"/>
</dbReference>
<dbReference type="Pfam" id="PF13855">
    <property type="entry name" value="LRR_8"/>
    <property type="match status" value="2"/>
</dbReference>
<dbReference type="Pfam" id="PF08263">
    <property type="entry name" value="LRRNT_2"/>
    <property type="match status" value="1"/>
</dbReference>
<dbReference type="PRINTS" id="PR00019">
    <property type="entry name" value="LEURICHRPT"/>
</dbReference>
<dbReference type="SMART" id="SM00365">
    <property type="entry name" value="LRR_SD22"/>
    <property type="match status" value="5"/>
</dbReference>
<dbReference type="SMART" id="SM00369">
    <property type="entry name" value="LRR_TYP"/>
    <property type="match status" value="8"/>
</dbReference>
<dbReference type="SUPFAM" id="SSF52058">
    <property type="entry name" value="L domain-like"/>
    <property type="match status" value="2"/>
</dbReference>
<dbReference type="SUPFAM" id="SSF52047">
    <property type="entry name" value="RNI-like"/>
    <property type="match status" value="1"/>
</dbReference>
<dbReference type="PROSITE" id="PS51450">
    <property type="entry name" value="LRR"/>
    <property type="match status" value="18"/>
</dbReference>